<reference key="1">
    <citation type="journal article" date="2006" name="Proc. Natl. Acad. Sci. U.S.A.">
        <title>Multireplicon genome architecture of Lactobacillus salivarius.</title>
        <authorList>
            <person name="Claesson M.J."/>
            <person name="Li Y."/>
            <person name="Leahy S."/>
            <person name="Canchaya C."/>
            <person name="van Pijkeren J.P."/>
            <person name="Cerdeno-Tarraga A.M."/>
            <person name="Parkhill J."/>
            <person name="Flynn S."/>
            <person name="O'Sullivan G.C."/>
            <person name="Collins J.K."/>
            <person name="Higgins D."/>
            <person name="Shanahan F."/>
            <person name="Fitzgerald G.F."/>
            <person name="van Sinderen D."/>
            <person name="O'Toole P.W."/>
        </authorList>
    </citation>
    <scope>NUCLEOTIDE SEQUENCE [LARGE SCALE GENOMIC DNA]</scope>
    <source>
        <strain>UCC118</strain>
    </source>
</reference>
<organism>
    <name type="scientific">Ligilactobacillus salivarius (strain UCC118)</name>
    <name type="common">Lactobacillus salivarius</name>
    <dbReference type="NCBI Taxonomy" id="362948"/>
    <lineage>
        <taxon>Bacteria</taxon>
        <taxon>Bacillati</taxon>
        <taxon>Bacillota</taxon>
        <taxon>Bacilli</taxon>
        <taxon>Lactobacillales</taxon>
        <taxon>Lactobacillaceae</taxon>
        <taxon>Ligilactobacillus</taxon>
    </lineage>
</organism>
<name>PYRF_LIGS1</name>
<gene>
    <name evidence="1" type="primary">pyrF</name>
    <name type="ordered locus">LSL_0830</name>
</gene>
<evidence type="ECO:0000255" key="1">
    <source>
        <dbReference type="HAMAP-Rule" id="MF_01200"/>
    </source>
</evidence>
<comment type="function">
    <text evidence="1">Catalyzes the decarboxylation of orotidine 5'-monophosphate (OMP) to uridine 5'-monophosphate (UMP).</text>
</comment>
<comment type="catalytic activity">
    <reaction evidence="1">
        <text>orotidine 5'-phosphate + H(+) = UMP + CO2</text>
        <dbReference type="Rhea" id="RHEA:11596"/>
        <dbReference type="ChEBI" id="CHEBI:15378"/>
        <dbReference type="ChEBI" id="CHEBI:16526"/>
        <dbReference type="ChEBI" id="CHEBI:57538"/>
        <dbReference type="ChEBI" id="CHEBI:57865"/>
        <dbReference type="EC" id="4.1.1.23"/>
    </reaction>
</comment>
<comment type="pathway">
    <text evidence="1">Pyrimidine metabolism; UMP biosynthesis via de novo pathway; UMP from orotate: step 2/2.</text>
</comment>
<comment type="subunit">
    <text evidence="1">Homodimer.</text>
</comment>
<comment type="similarity">
    <text evidence="1">Belongs to the OMP decarboxylase family. Type 1 subfamily.</text>
</comment>
<dbReference type="EC" id="4.1.1.23" evidence="1"/>
<dbReference type="EMBL" id="CP000233">
    <property type="protein sequence ID" value="ABD99640.1"/>
    <property type="molecule type" value="Genomic_DNA"/>
</dbReference>
<dbReference type="RefSeq" id="WP_003704381.1">
    <property type="nucleotide sequence ID" value="NC_007929.1"/>
</dbReference>
<dbReference type="RefSeq" id="YP_535723.1">
    <property type="nucleotide sequence ID" value="NC_007929.1"/>
</dbReference>
<dbReference type="SMR" id="Q1WTX2"/>
<dbReference type="STRING" id="362948.LSL_0830"/>
<dbReference type="KEGG" id="lsl:LSL_0830"/>
<dbReference type="PATRIC" id="fig|362948.14.peg.905"/>
<dbReference type="HOGENOM" id="CLU_067069_1_1_9"/>
<dbReference type="OrthoDB" id="9806203at2"/>
<dbReference type="UniPathway" id="UPA00070">
    <property type="reaction ID" value="UER00120"/>
</dbReference>
<dbReference type="Proteomes" id="UP000006559">
    <property type="component" value="Chromosome"/>
</dbReference>
<dbReference type="GO" id="GO:0005829">
    <property type="term" value="C:cytosol"/>
    <property type="evidence" value="ECO:0007669"/>
    <property type="project" value="TreeGrafter"/>
</dbReference>
<dbReference type="GO" id="GO:0004590">
    <property type="term" value="F:orotidine-5'-phosphate decarboxylase activity"/>
    <property type="evidence" value="ECO:0007669"/>
    <property type="project" value="UniProtKB-UniRule"/>
</dbReference>
<dbReference type="GO" id="GO:0006207">
    <property type="term" value="P:'de novo' pyrimidine nucleobase biosynthetic process"/>
    <property type="evidence" value="ECO:0007669"/>
    <property type="project" value="InterPro"/>
</dbReference>
<dbReference type="GO" id="GO:0044205">
    <property type="term" value="P:'de novo' UMP biosynthetic process"/>
    <property type="evidence" value="ECO:0007669"/>
    <property type="project" value="UniProtKB-UniRule"/>
</dbReference>
<dbReference type="CDD" id="cd04725">
    <property type="entry name" value="OMP_decarboxylase_like"/>
    <property type="match status" value="1"/>
</dbReference>
<dbReference type="FunFam" id="3.20.20.70:FF:000015">
    <property type="entry name" value="Orotidine 5'-phosphate decarboxylase"/>
    <property type="match status" value="1"/>
</dbReference>
<dbReference type="Gene3D" id="3.20.20.70">
    <property type="entry name" value="Aldolase class I"/>
    <property type="match status" value="1"/>
</dbReference>
<dbReference type="HAMAP" id="MF_01200_B">
    <property type="entry name" value="OMPdecase_type1_B"/>
    <property type="match status" value="1"/>
</dbReference>
<dbReference type="InterPro" id="IPR013785">
    <property type="entry name" value="Aldolase_TIM"/>
</dbReference>
<dbReference type="InterPro" id="IPR014732">
    <property type="entry name" value="OMPdecase"/>
</dbReference>
<dbReference type="InterPro" id="IPR018089">
    <property type="entry name" value="OMPdecase_AS"/>
</dbReference>
<dbReference type="InterPro" id="IPR047596">
    <property type="entry name" value="OMPdecase_bac"/>
</dbReference>
<dbReference type="InterPro" id="IPR001754">
    <property type="entry name" value="OMPdeCOase_dom"/>
</dbReference>
<dbReference type="InterPro" id="IPR011060">
    <property type="entry name" value="RibuloseP-bd_barrel"/>
</dbReference>
<dbReference type="NCBIfam" id="NF001273">
    <property type="entry name" value="PRK00230.1"/>
    <property type="match status" value="1"/>
</dbReference>
<dbReference type="NCBIfam" id="TIGR01740">
    <property type="entry name" value="pyrF"/>
    <property type="match status" value="1"/>
</dbReference>
<dbReference type="PANTHER" id="PTHR32119">
    <property type="entry name" value="OROTIDINE 5'-PHOSPHATE DECARBOXYLASE"/>
    <property type="match status" value="1"/>
</dbReference>
<dbReference type="PANTHER" id="PTHR32119:SF2">
    <property type="entry name" value="OROTIDINE 5'-PHOSPHATE DECARBOXYLASE"/>
    <property type="match status" value="1"/>
</dbReference>
<dbReference type="Pfam" id="PF00215">
    <property type="entry name" value="OMPdecase"/>
    <property type="match status" value="1"/>
</dbReference>
<dbReference type="SMART" id="SM00934">
    <property type="entry name" value="OMPdecase"/>
    <property type="match status" value="1"/>
</dbReference>
<dbReference type="SUPFAM" id="SSF51366">
    <property type="entry name" value="Ribulose-phoshate binding barrel"/>
    <property type="match status" value="1"/>
</dbReference>
<dbReference type="PROSITE" id="PS00156">
    <property type="entry name" value="OMPDECASE"/>
    <property type="match status" value="1"/>
</dbReference>
<proteinExistence type="inferred from homology"/>
<sequence length="237" mass="26180">MKYDRPIIALDFPDKEKTFEFLKKFPEDEKLFVKVGMELFYSEGSDMVKELISEGHDVFLDLKLHDIPNTVKQAMKVIGKLGVKLTTVHISGGSEMLIAAKEGLLDGANGDTNTKILGITQLTSTDEEMVKNEQKLSISLKESVKNYAKIAQKSGLDGVVCSAEESDMIYKLTGDDFLRITPGIRLAGGDVGDQKRVMTPDAAARNHSSGIVVGRAITKAENPLDSYRLVTKLWREK</sequence>
<protein>
    <recommendedName>
        <fullName evidence="1">Orotidine 5'-phosphate decarboxylase</fullName>
        <ecNumber evidence="1">4.1.1.23</ecNumber>
    </recommendedName>
    <alternativeName>
        <fullName evidence="1">OMP decarboxylase</fullName>
        <shortName evidence="1">OMPDCase</shortName>
        <shortName evidence="1">OMPdecase</shortName>
    </alternativeName>
</protein>
<feature type="chain" id="PRO_1000065916" description="Orotidine 5'-phosphate decarboxylase">
    <location>
        <begin position="1"/>
        <end position="237"/>
    </location>
</feature>
<feature type="active site" description="Proton donor" evidence="1">
    <location>
        <position position="63"/>
    </location>
</feature>
<feature type="binding site" evidence="1">
    <location>
        <position position="11"/>
    </location>
    <ligand>
        <name>substrate</name>
    </ligand>
</feature>
<feature type="binding site" evidence="1">
    <location>
        <position position="34"/>
    </location>
    <ligand>
        <name>substrate</name>
    </ligand>
</feature>
<feature type="binding site" evidence="1">
    <location>
        <begin position="61"/>
        <end position="70"/>
    </location>
    <ligand>
        <name>substrate</name>
    </ligand>
</feature>
<feature type="binding site" evidence="1">
    <location>
        <position position="123"/>
    </location>
    <ligand>
        <name>substrate</name>
    </ligand>
</feature>
<feature type="binding site" evidence="1">
    <location>
        <position position="185"/>
    </location>
    <ligand>
        <name>substrate</name>
    </ligand>
</feature>
<feature type="binding site" evidence="1">
    <location>
        <position position="194"/>
    </location>
    <ligand>
        <name>substrate</name>
    </ligand>
</feature>
<feature type="binding site" evidence="1">
    <location>
        <position position="214"/>
    </location>
    <ligand>
        <name>substrate</name>
    </ligand>
</feature>
<feature type="binding site" evidence="1">
    <location>
        <position position="215"/>
    </location>
    <ligand>
        <name>substrate</name>
    </ligand>
</feature>
<keyword id="KW-0210">Decarboxylase</keyword>
<keyword id="KW-0456">Lyase</keyword>
<keyword id="KW-0665">Pyrimidine biosynthesis</keyword>
<keyword id="KW-1185">Reference proteome</keyword>
<accession>Q1WTX2</accession>